<proteinExistence type="evidence at protein level"/>
<accession>Q9Z2C8</accession>
<accession>Q5NCW8</accession>
<accession>Q5NCW9</accession>
<accession>Q9Z2C7</accession>
<gene>
    <name type="primary">Ybx2</name>
    <name evidence="12" type="synonym">Msy2</name>
</gene>
<feature type="chain" id="PRO_0000100226" description="Y-box-binding protein 2">
    <location>
        <begin position="1"/>
        <end position="360"/>
    </location>
</feature>
<feature type="domain" description="CSD">
    <location>
        <begin position="95"/>
        <end position="165"/>
    </location>
</feature>
<feature type="region of interest" description="Disordered" evidence="1">
    <location>
        <begin position="34"/>
        <end position="87"/>
    </location>
</feature>
<feature type="region of interest" description="Required for cytoplasmic retention" evidence="6">
    <location>
        <begin position="89"/>
        <end position="171"/>
    </location>
</feature>
<feature type="region of interest" description="Disordered" evidence="1">
    <location>
        <begin position="159"/>
        <end position="360"/>
    </location>
</feature>
<feature type="region of interest" description="Required for mRNA-binding" evidence="6">
    <location>
        <begin position="219"/>
        <end position="360"/>
    </location>
</feature>
<feature type="compositionally biased region" description="Gly residues" evidence="1">
    <location>
        <begin position="40"/>
        <end position="51"/>
    </location>
</feature>
<feature type="compositionally biased region" description="Basic residues" evidence="1">
    <location>
        <begin position="177"/>
        <end position="187"/>
    </location>
</feature>
<feature type="compositionally biased region" description="Pro residues" evidence="1">
    <location>
        <begin position="188"/>
        <end position="197"/>
    </location>
</feature>
<feature type="compositionally biased region" description="Low complexity" evidence="1">
    <location>
        <begin position="198"/>
        <end position="209"/>
    </location>
</feature>
<feature type="compositionally biased region" description="Basic and acidic residues" evidence="1">
    <location>
        <begin position="211"/>
        <end position="220"/>
    </location>
</feature>
<feature type="compositionally biased region" description="Basic residues" evidence="1">
    <location>
        <begin position="221"/>
        <end position="238"/>
    </location>
</feature>
<feature type="compositionally biased region" description="Basic residues" evidence="1">
    <location>
        <begin position="279"/>
        <end position="288"/>
    </location>
</feature>
<feature type="compositionally biased region" description="Basic residues" evidence="1">
    <location>
        <begin position="321"/>
        <end position="332"/>
    </location>
</feature>
<feature type="modified residue" description="Phosphothreonine" evidence="14">
    <location>
        <position position="67"/>
    </location>
</feature>
<feature type="modified residue" description="Phosphothreonine" evidence="14">
    <location>
        <position position="78"/>
    </location>
</feature>
<feature type="modified residue" description="Phosphoserine" evidence="14">
    <location>
        <position position="252"/>
    </location>
</feature>
<feature type="splice variant" id="VSP_013052" description="In isoform 2." evidence="12">
    <location>
        <begin position="1"/>
        <end position="78"/>
    </location>
</feature>
<feature type="splice variant" id="VSP_013053" description="In isoform 2." evidence="12">
    <original>PAPPARSQADKPV</original>
    <variation>MSRRAGQAGSAKA</variation>
    <location>
        <begin position="79"/>
        <end position="91"/>
    </location>
</feature>
<feature type="mutagenesis site" description="Abolishes cytoplasmic retention and mRNA-binding affinity; when associated with A-111." evidence="6">
    <original>Y</original>
    <variation>A</variation>
    <location>
        <position position="109"/>
    </location>
</feature>
<feature type="mutagenesis site" description="Abolishes cytoplasmic retention and mRNA-binding affinity; when associated with A-109." evidence="6">
    <original>F</original>
    <variation>A</variation>
    <location>
        <position position="111"/>
    </location>
</feature>
<feature type="sequence conflict" description="In Ref. 2; CAI35155." evidence="13" ref="2">
    <original>LH</original>
    <variation>S</variation>
    <location>
        <begin position="60"/>
        <end position="61"/>
    </location>
</feature>
<feature type="sequence conflict" description="In Ref. 2; CAI35155/CAI35156." evidence="13" ref="2">
    <original>R</original>
    <variation>E</variation>
    <location>
        <position position="158"/>
    </location>
</feature>
<keyword id="KW-0025">Alternative splicing</keyword>
<keyword id="KW-0963">Cytoplasm</keyword>
<keyword id="KW-0238">DNA-binding</keyword>
<keyword id="KW-0539">Nucleus</keyword>
<keyword id="KW-0597">Phosphoprotein</keyword>
<keyword id="KW-1185">Reference proteome</keyword>
<keyword id="KW-0694">RNA-binding</keyword>
<sequence>MSEAEASVVATAAPAATVPATAAGVVAVVVPVPAGEPQKAGGGAGGGGGAASGPAAGTPLHAPGPRTPGNQATAASGTPAPPARSQADKPVLAIQVLGTVKWFNVRNGYGFINRNDTKEDVFVHQTAIKRNNPRKFLRSVGDGETVEFDVVEGEKGARAANVTGPGGVPVKGSRYAPNRRRFRRFIPRPRPAAPPPMVAEAPSGGTEPGSEGERAEDSGQRPRRRRPPPFFYRRRFVRGPRPPNQQQPIEGSDGVEPKETAPLEGDQQQGDERVPPPRFRPRYRRPFRPRPPQQPTTEGGDGETKPSQGPTDGSRPEPQRPRNRPYFQRRRQQPPGPRQPIAAETSAPINSGDPPTTILE</sequence>
<protein>
    <recommendedName>
        <fullName evidence="12">Y-box-binding protein 2</fullName>
    </recommendedName>
    <alternativeName>
        <fullName>FRGY2 homolog</fullName>
    </alternativeName>
    <alternativeName>
        <fullName>Germ cell-specific Y-box-binding protein</fullName>
    </alternativeName>
</protein>
<name>YBOX2_MOUSE</name>
<comment type="function">
    <text evidence="2 5 6 7 8">Major constituent of messenger ribonucleoprotein particles (mRNPs) (PubMed:10076007, PubMed:12297523, PubMed:12648488). Involved in the regulation of the stability and/or translation of germ cell mRNAs (PubMed:15031116). Binds to Y-box consensus promoter element (PubMed:10076007, PubMed:12297523, PubMed:12648488). Binds to full-length mRNA with high affinity in a sequence-independent manner (PubMed:10076007, PubMed:12297523, PubMed:12648488). Binds to short RNA sequences containing the consensus site 5'-UCCAUCA-3' with low affinity and limited sequence specificity (PubMed:10076007, PubMed:12297523, PubMed:12648488). Its binding with maternal mRNAs is necessary for its cytoplasmic retention (PubMed:10076007, PubMed:12297523, PubMed:12648488). May mark specific mRNAs (those transcribed from Y-box promoters) in the nucleus for cytoplasmic storage, thereby linking transcription and mRNA storage/translational delay (PubMed:15665108).</text>
</comment>
<comment type="subunit">
    <text evidence="2 3 10">Found in a mRNP complex with PABPC1 and YBX3 (PubMed:10076007, PubMed:10772793). Found in a mRNP complex with ZAR1 and ZAR1L (PubMed:31598710).</text>
</comment>
<comment type="subcellular location">
    <subcellularLocation>
        <location evidence="4">Cytoplasm</location>
    </subcellularLocation>
    <subcellularLocation>
        <location evidence="4">Nucleus</location>
    </subcellularLocation>
</comment>
<comment type="alternative products">
    <event type="alternative splicing"/>
    <isoform>
        <id>Q9Z2C8-1</id>
        <name>1</name>
        <name>Msy2</name>
        <sequence type="displayed"/>
    </isoform>
    <isoform>
        <id>Q9Z2C8-2</id>
        <name>2</name>
        <name>Msy2a</name>
        <sequence type="described" ref="VSP_013052 VSP_013053"/>
    </isoform>
</comment>
<comment type="tissue specificity">
    <text evidence="4 11">Expressed in meiotic and postmeiotic male germ cells and oocytes; poorly expressed in two cell stage embryos (at protein level). Not detected in preimplantation embryos.</text>
</comment>
<comment type="tissue specificity">
    <molecule>Isoform 2</molecule>
    <text evidence="3">Not detected in oocytes.</text>
</comment>
<comment type="PTM">
    <text evidence="2 4">Phosphorylated during oocyte maturation and dephosphorylated following egg activation. Phosphorylated in vitro by a kinase activity associated with testicular mRNPs. Dephosphorylation leads to a decrease in its affinity to bind RNA in vitro.</text>
</comment>
<comment type="disruption phenotype">
    <text evidence="9">Male and female infertility (PubMed:15824319). Postmeiotic germ cell mRNA levels are greatly reduced (PubMed:15824319). Spermatogenesis arrests in late spermiogenesis (PubMed:15824319). Early loss of oocytes followed by defects in ovulation in observed in females (PubMed:15824319).</text>
</comment>
<dbReference type="EMBL" id="AF073954">
    <property type="protein sequence ID" value="AAC98673.1"/>
    <property type="molecule type" value="mRNA"/>
</dbReference>
<dbReference type="EMBL" id="AF073955">
    <property type="protein sequence ID" value="AAC98674.1"/>
    <property type="molecule type" value="mRNA"/>
</dbReference>
<dbReference type="EMBL" id="AL596185">
    <property type="protein sequence ID" value="CAI35155.1"/>
    <property type="molecule type" value="Genomic_DNA"/>
</dbReference>
<dbReference type="EMBL" id="AL596185">
    <property type="protein sequence ID" value="CAI35156.1"/>
    <property type="molecule type" value="Genomic_DNA"/>
</dbReference>
<dbReference type="CCDS" id="CCDS83830.1">
    <molecule id="Q9Z2C8-2"/>
</dbReference>
<dbReference type="SMR" id="Q9Z2C8"/>
<dbReference type="CORUM" id="Q9Z2C8"/>
<dbReference type="DIP" id="DIP-59783N"/>
<dbReference type="FunCoup" id="Q9Z2C8">
    <property type="interactions" value="67"/>
</dbReference>
<dbReference type="IntAct" id="Q9Z2C8">
    <property type="interactions" value="2"/>
</dbReference>
<dbReference type="STRING" id="10090.ENSMUSP00000018698"/>
<dbReference type="GlyGen" id="Q9Z2C8">
    <property type="glycosylation" value="3 sites, 1 O-linked glycan (1 site)"/>
</dbReference>
<dbReference type="iPTMnet" id="Q9Z2C8"/>
<dbReference type="PhosphoSitePlus" id="Q9Z2C8"/>
<dbReference type="REPRODUCTION-2DPAGE" id="Q9Z2C8"/>
<dbReference type="jPOST" id="Q9Z2C8"/>
<dbReference type="PaxDb" id="10090-ENSMUSP00000018698"/>
<dbReference type="PeptideAtlas" id="Q9Z2C8"/>
<dbReference type="ProteomicsDB" id="299804">
    <molecule id="Q9Z2C8-1"/>
</dbReference>
<dbReference type="ProteomicsDB" id="299805">
    <molecule id="Q9Z2C8-2"/>
</dbReference>
<dbReference type="AGR" id="MGI:1096372"/>
<dbReference type="MGI" id="MGI:1096372">
    <property type="gene designation" value="Ybx2"/>
</dbReference>
<dbReference type="eggNOG" id="KOG3070">
    <property type="taxonomic scope" value="Eukaryota"/>
</dbReference>
<dbReference type="InParanoid" id="Q9Z2C8"/>
<dbReference type="PhylomeDB" id="Q9Z2C8"/>
<dbReference type="CD-CODE" id="089DA44D">
    <property type="entry name" value="MARDO"/>
</dbReference>
<dbReference type="CD-CODE" id="DE1E139C">
    <property type="entry name" value="Chromatoid body"/>
</dbReference>
<dbReference type="ChiTaRS" id="Ybx2">
    <property type="organism name" value="mouse"/>
</dbReference>
<dbReference type="PRO" id="PR:Q9Z2C8"/>
<dbReference type="Proteomes" id="UP000000589">
    <property type="component" value="Unplaced"/>
</dbReference>
<dbReference type="RNAct" id="Q9Z2C8">
    <property type="molecule type" value="protein"/>
</dbReference>
<dbReference type="GO" id="GO:0005737">
    <property type="term" value="C:cytoplasm"/>
    <property type="evidence" value="ECO:0000314"/>
    <property type="project" value="MGI"/>
</dbReference>
<dbReference type="GO" id="GO:0005634">
    <property type="term" value="C:nucleus"/>
    <property type="evidence" value="ECO:0007669"/>
    <property type="project" value="UniProtKB-SubCell"/>
</dbReference>
<dbReference type="GO" id="GO:1990904">
    <property type="term" value="C:ribonucleoprotein complex"/>
    <property type="evidence" value="ECO:0000314"/>
    <property type="project" value="MGI"/>
</dbReference>
<dbReference type="GO" id="GO:0003682">
    <property type="term" value="F:chromatin binding"/>
    <property type="evidence" value="ECO:0000314"/>
    <property type="project" value="MGI"/>
</dbReference>
<dbReference type="GO" id="GO:0003677">
    <property type="term" value="F:DNA binding"/>
    <property type="evidence" value="ECO:0007669"/>
    <property type="project" value="UniProtKB-KW"/>
</dbReference>
<dbReference type="GO" id="GO:0008289">
    <property type="term" value="F:lipid binding"/>
    <property type="evidence" value="ECO:0000314"/>
    <property type="project" value="MGI"/>
</dbReference>
<dbReference type="GO" id="GO:0003730">
    <property type="term" value="F:mRNA 3'-UTR binding"/>
    <property type="evidence" value="ECO:0000314"/>
    <property type="project" value="MGI"/>
</dbReference>
<dbReference type="GO" id="GO:0003729">
    <property type="term" value="F:mRNA binding"/>
    <property type="evidence" value="ECO:0000314"/>
    <property type="project" value="MGI"/>
</dbReference>
<dbReference type="GO" id="GO:0043021">
    <property type="term" value="F:ribonucleoprotein complex binding"/>
    <property type="evidence" value="ECO:0000314"/>
    <property type="project" value="MGI"/>
</dbReference>
<dbReference type="GO" id="GO:0045182">
    <property type="term" value="F:translation regulator activity"/>
    <property type="evidence" value="ECO:0000314"/>
    <property type="project" value="MGI"/>
</dbReference>
<dbReference type="GO" id="GO:0048255">
    <property type="term" value="P:mRNA stabilization"/>
    <property type="evidence" value="ECO:0000315"/>
    <property type="project" value="MGI"/>
</dbReference>
<dbReference type="GO" id="GO:0017148">
    <property type="term" value="P:negative regulation of translation"/>
    <property type="evidence" value="ECO:0000314"/>
    <property type="project" value="MGI"/>
</dbReference>
<dbReference type="GO" id="GO:0048477">
    <property type="term" value="P:oogenesis"/>
    <property type="evidence" value="ECO:0000315"/>
    <property type="project" value="MGI"/>
</dbReference>
<dbReference type="GO" id="GO:0120162">
    <property type="term" value="P:positive regulation of cold-induced thermogenesis"/>
    <property type="evidence" value="ECO:0000315"/>
    <property type="project" value="YuBioLab"/>
</dbReference>
<dbReference type="GO" id="GO:0007286">
    <property type="term" value="P:spermatid development"/>
    <property type="evidence" value="ECO:0000315"/>
    <property type="project" value="MGI"/>
</dbReference>
<dbReference type="CDD" id="cd04458">
    <property type="entry name" value="CSP_CDS"/>
    <property type="match status" value="1"/>
</dbReference>
<dbReference type="FunFam" id="2.40.50.140:FF:000054">
    <property type="entry name" value="Nuclease-sensitive element-binding protein 1"/>
    <property type="match status" value="1"/>
</dbReference>
<dbReference type="Gene3D" id="2.40.50.140">
    <property type="entry name" value="Nucleic acid-binding proteins"/>
    <property type="match status" value="1"/>
</dbReference>
<dbReference type="InterPro" id="IPR050181">
    <property type="entry name" value="Cold_shock_domain"/>
</dbReference>
<dbReference type="InterPro" id="IPR011129">
    <property type="entry name" value="CSD"/>
</dbReference>
<dbReference type="InterPro" id="IPR019844">
    <property type="entry name" value="CSD_CS"/>
</dbReference>
<dbReference type="InterPro" id="IPR002059">
    <property type="entry name" value="CSP_DNA-bd"/>
</dbReference>
<dbReference type="InterPro" id="IPR012340">
    <property type="entry name" value="NA-bd_OB-fold"/>
</dbReference>
<dbReference type="PANTHER" id="PTHR11544">
    <property type="entry name" value="COLD SHOCK DOMAIN CONTAINING PROTEINS"/>
    <property type="match status" value="1"/>
</dbReference>
<dbReference type="Pfam" id="PF00313">
    <property type="entry name" value="CSD"/>
    <property type="match status" value="1"/>
</dbReference>
<dbReference type="PRINTS" id="PR00050">
    <property type="entry name" value="COLDSHOCK"/>
</dbReference>
<dbReference type="SMART" id="SM00357">
    <property type="entry name" value="CSP"/>
    <property type="match status" value="1"/>
</dbReference>
<dbReference type="SUPFAM" id="SSF50249">
    <property type="entry name" value="Nucleic acid-binding proteins"/>
    <property type="match status" value="1"/>
</dbReference>
<dbReference type="PROSITE" id="PS00352">
    <property type="entry name" value="CSD_1"/>
    <property type="match status" value="1"/>
</dbReference>
<dbReference type="PROSITE" id="PS51857">
    <property type="entry name" value="CSD_2"/>
    <property type="match status" value="1"/>
</dbReference>
<reference key="1">
    <citation type="journal article" date="1998" name="Biol. Reprod.">
        <title>Mammalian male and female germ cells express a germ cell-specific Y-box protein, MSY2.</title>
        <authorList>
            <person name="Gu W."/>
            <person name="Tekur S."/>
            <person name="Reinbold R."/>
            <person name="Eppig J.J."/>
            <person name="Choi Y.-C."/>
            <person name="Zheng J.Z."/>
            <person name="Murray M.T."/>
            <person name="Hecht N.B."/>
        </authorList>
    </citation>
    <scope>NUCLEOTIDE SEQUENCE [MRNA] (ISOFORMS 1 AND 2)</scope>
    <scope>TISSUE SPECIFICITY</scope>
    <source>
        <strain>CD-1</strain>
        <tissue>Testis</tissue>
    </source>
</reference>
<reference key="2">
    <citation type="journal article" date="2009" name="PLoS Biol.">
        <title>Lineage-specific biology revealed by a finished genome assembly of the mouse.</title>
        <authorList>
            <person name="Church D.M."/>
            <person name="Goodstadt L."/>
            <person name="Hillier L.W."/>
            <person name="Zody M.C."/>
            <person name="Goldstein S."/>
            <person name="She X."/>
            <person name="Bult C.J."/>
            <person name="Agarwala R."/>
            <person name="Cherry J.L."/>
            <person name="DiCuccio M."/>
            <person name="Hlavina W."/>
            <person name="Kapustin Y."/>
            <person name="Meric P."/>
            <person name="Maglott D."/>
            <person name="Birtle Z."/>
            <person name="Marques A.C."/>
            <person name="Graves T."/>
            <person name="Zhou S."/>
            <person name="Teague B."/>
            <person name="Potamousis K."/>
            <person name="Churas C."/>
            <person name="Place M."/>
            <person name="Herschleb J."/>
            <person name="Runnheim R."/>
            <person name="Forrest D."/>
            <person name="Amos-Landgraf J."/>
            <person name="Schwartz D.C."/>
            <person name="Cheng Z."/>
            <person name="Lindblad-Toh K."/>
            <person name="Eichler E.E."/>
            <person name="Ponting C.P."/>
        </authorList>
    </citation>
    <scope>NUCLEOTIDE SEQUENCE [LARGE SCALE GENOMIC DNA]</scope>
    <source>
        <strain>C57BL/6J</strain>
    </source>
</reference>
<reference key="3">
    <citation type="journal article" date="1999" name="Nucleic Acids Res.">
        <title>The mouse Y-box protein, MSY2, is associated with a kinase on non-polysomal mouse testicular mRNAs.</title>
        <authorList>
            <person name="Herbert T.P."/>
            <person name="Hecht N.B."/>
        </authorList>
    </citation>
    <scope>FUNCTION IN MRNA TRANSLATION</scope>
    <scope>PHOSPHORYLATION</scope>
    <scope>RNA-BINDING</scope>
    <scope>IDENTIFICATION IN A MRNP COMPLEX WITH PABPC1</scope>
</reference>
<reference key="4">
    <citation type="journal article" date="2000" name="Dev. Biol.">
        <title>A sequence-specific RNA binding complex expressed in murine germ cells contains MSY2 and MSY4.</title>
        <authorList>
            <person name="Davies H.G."/>
            <person name="Giorgini F."/>
            <person name="Fajardo M.A."/>
            <person name="Braun R.E."/>
        </authorList>
    </citation>
    <scope>IDENTIFICATION IN A MRNP COMPLEX WITH YBX3</scope>
    <scope>TISSUE SPECIFICITY (ISOFORM 2)</scope>
    <source>
        <tissue>Testis</tissue>
    </source>
</reference>
<reference key="5">
    <citation type="journal article" date="2001" name="Biol. Reprod.">
        <title>Expression of MSY2 in mouse oocytes and preimplantation embryos.</title>
        <authorList>
            <person name="Yu J."/>
            <person name="Hecht N.B."/>
            <person name="Schultz R.M."/>
        </authorList>
    </citation>
    <scope>PHOSPHORYLATION</scope>
    <scope>SUBCELLULAR LOCATION</scope>
    <scope>TISSUE SPECIFICITY</scope>
</reference>
<reference key="6">
    <citation type="journal article" date="2001" name="Mol. Cell. Biol.">
        <title>MSY2 and MSY4 bind a conserved sequence in the 3' untranslated region of protamine 1 mRNA in vitro and in vivo.</title>
        <authorList>
            <person name="Giorgini F."/>
            <person name="Davies H.G."/>
            <person name="Braun R.E."/>
        </authorList>
    </citation>
    <scope>RNA-BINDING</scope>
</reference>
<reference key="7">
    <citation type="journal article" date="2002" name="Biol. Reprod.">
        <title>RNA-binding properties and translation repression in vitro by germ cell-specific MSY2 protein.</title>
        <authorList>
            <person name="Yu J."/>
            <person name="Hecht N.B."/>
            <person name="Schultz R.M."/>
        </authorList>
    </citation>
    <scope>FUNCTION IN MRNA TRANSLATION</scope>
    <scope>RNA-BINDING</scope>
</reference>
<reference key="8">
    <citation type="journal article" date="2003" name="Dev. Biol.">
        <title>Requirement for RNA-binding activity of MSY2 for cytoplasmic localization and retention in mouse oocytes.</title>
        <authorList>
            <person name="Yu J."/>
            <person name="Hecht N.B."/>
            <person name="Schultz R.M."/>
        </authorList>
    </citation>
    <scope>FUNCTION IN MATERNAL MRNA CYTOPLASMIC RETENTION</scope>
    <scope>RNA-BINDING</scope>
    <scope>MUTAGENESIS OF TYR-109 AND PHE-111</scope>
</reference>
<reference key="9">
    <citation type="journal article" date="2004" name="Dev. Biol.">
        <title>Transgenic RNAi-mediated reduction of MSY2 in mouse oocytes results in reduced fertility.</title>
        <authorList>
            <person name="Yu J."/>
            <person name="Deng M."/>
            <person name="Medvedev S."/>
            <person name="Yang J."/>
            <person name="Hecht N.B."/>
            <person name="Schultz R.M."/>
        </authorList>
    </citation>
    <scope>FUNCTION IN MRNA STABILITY</scope>
</reference>
<reference key="10">
    <citation type="journal article" date="2005" name="Proc. Natl. Acad. Sci. U.S.A.">
        <title>The DNA/RNA-binding protein MSY2 marks specific transcripts for cytoplasmic storage in mouse male germ cells.</title>
        <authorList>
            <person name="Yang J."/>
            <person name="Medvedev S."/>
            <person name="Reddi P.P."/>
            <person name="Schultz R.M."/>
            <person name="Hecht N.B."/>
        </authorList>
    </citation>
    <scope>FUNCTION IN CYTOPLASMIC MRNA STORAGE</scope>
    <scope>RNA-BINDING</scope>
    <scope>DNA-BINDING</scope>
</reference>
<reference key="11">
    <citation type="journal article" date="2005" name="Proc. Natl. Acad. Sci. U.S.A.">
        <title>Absence of the DNA-/RNA-binding protein MSY2 results in male and female infertility.</title>
        <authorList>
            <person name="Yang J."/>
            <person name="Medvedev S."/>
            <person name="Yu J."/>
            <person name="Tang L.C."/>
            <person name="Agno J.E."/>
            <person name="Matzuk M.M."/>
            <person name="Schultz R.M."/>
            <person name="Hecht N.B."/>
        </authorList>
    </citation>
    <scope>FUNCTION</scope>
    <scope>DISRUPTION PHENOTYPE</scope>
</reference>
<reference key="12">
    <citation type="journal article" date="2010" name="Cell">
        <title>A tissue-specific atlas of mouse protein phosphorylation and expression.</title>
        <authorList>
            <person name="Huttlin E.L."/>
            <person name="Jedrychowski M.P."/>
            <person name="Elias J.E."/>
            <person name="Goswami T."/>
            <person name="Rad R."/>
            <person name="Beausoleil S.A."/>
            <person name="Villen J."/>
            <person name="Haas W."/>
            <person name="Sowa M.E."/>
            <person name="Gygi S.P."/>
        </authorList>
    </citation>
    <scope>PHOSPHORYLATION [LARGE SCALE ANALYSIS] AT THR-67; THR-78 AND SER-252</scope>
    <scope>IDENTIFICATION BY MASS SPECTROMETRY [LARGE SCALE ANALYSIS]</scope>
    <source>
        <tissue>Brown adipose tissue</tissue>
        <tissue>Heart</tissue>
        <tissue>Testis</tissue>
    </source>
</reference>
<reference key="13">
    <citation type="journal article" date="2019" name="Nucleic Acids Res.">
        <title>ZAR1 and ZAR2 are required for oocyte meiotic maturation by regulating the maternal transcriptome and mRNA translational activation.</title>
        <authorList>
            <person name="Rong Y."/>
            <person name="Ji S.Y."/>
            <person name="Zhu Y.Z."/>
            <person name="Wu Y.W."/>
            <person name="Shen L."/>
            <person name="Fan H.Y."/>
        </authorList>
    </citation>
    <scope>INTERACTION WITH ZAR1 AND ZAR1L</scope>
</reference>
<organism>
    <name type="scientific">Mus musculus</name>
    <name type="common">Mouse</name>
    <dbReference type="NCBI Taxonomy" id="10090"/>
    <lineage>
        <taxon>Eukaryota</taxon>
        <taxon>Metazoa</taxon>
        <taxon>Chordata</taxon>
        <taxon>Craniata</taxon>
        <taxon>Vertebrata</taxon>
        <taxon>Euteleostomi</taxon>
        <taxon>Mammalia</taxon>
        <taxon>Eutheria</taxon>
        <taxon>Euarchontoglires</taxon>
        <taxon>Glires</taxon>
        <taxon>Rodentia</taxon>
        <taxon>Myomorpha</taxon>
        <taxon>Muroidea</taxon>
        <taxon>Muridae</taxon>
        <taxon>Murinae</taxon>
        <taxon>Mus</taxon>
        <taxon>Mus</taxon>
    </lineage>
</organism>
<evidence type="ECO:0000256" key="1">
    <source>
        <dbReference type="SAM" id="MobiDB-lite"/>
    </source>
</evidence>
<evidence type="ECO:0000269" key="2">
    <source>
    </source>
</evidence>
<evidence type="ECO:0000269" key="3">
    <source>
    </source>
</evidence>
<evidence type="ECO:0000269" key="4">
    <source>
    </source>
</evidence>
<evidence type="ECO:0000269" key="5">
    <source>
    </source>
</evidence>
<evidence type="ECO:0000269" key="6">
    <source>
    </source>
</evidence>
<evidence type="ECO:0000269" key="7">
    <source>
    </source>
</evidence>
<evidence type="ECO:0000269" key="8">
    <source>
    </source>
</evidence>
<evidence type="ECO:0000269" key="9">
    <source>
    </source>
</evidence>
<evidence type="ECO:0000269" key="10">
    <source>
    </source>
</evidence>
<evidence type="ECO:0000269" key="11">
    <source>
    </source>
</evidence>
<evidence type="ECO:0000303" key="12">
    <source>
    </source>
</evidence>
<evidence type="ECO:0000305" key="13"/>
<evidence type="ECO:0007744" key="14">
    <source>
    </source>
</evidence>